<reference key="1">
    <citation type="submission" date="2009-07" db="EMBL/GenBank/DDBJ databases">
        <title>Complete sequence of Pectobacterium carotovorum subsp. carotovorum PC1.</title>
        <authorList>
            <consortium name="US DOE Joint Genome Institute"/>
            <person name="Lucas S."/>
            <person name="Copeland A."/>
            <person name="Lapidus A."/>
            <person name="Glavina del Rio T."/>
            <person name="Tice H."/>
            <person name="Bruce D."/>
            <person name="Goodwin L."/>
            <person name="Pitluck S."/>
            <person name="Munk A.C."/>
            <person name="Brettin T."/>
            <person name="Detter J.C."/>
            <person name="Han C."/>
            <person name="Tapia R."/>
            <person name="Larimer F."/>
            <person name="Land M."/>
            <person name="Hauser L."/>
            <person name="Kyrpides N."/>
            <person name="Mikhailova N."/>
            <person name="Balakrishnan V."/>
            <person name="Glasner J."/>
            <person name="Perna N.T."/>
        </authorList>
    </citation>
    <scope>NUCLEOTIDE SEQUENCE [LARGE SCALE GENOMIC DNA]</scope>
    <source>
        <strain>PC1</strain>
    </source>
</reference>
<keyword id="KW-0067">ATP-binding</keyword>
<keyword id="KW-0143">Chaperone</keyword>
<keyword id="KW-0547">Nucleotide-binding</keyword>
<keyword id="KW-0597">Phosphoprotein</keyword>
<keyword id="KW-0346">Stress response</keyword>
<comment type="function">
    <text evidence="1">Acts as a chaperone.</text>
</comment>
<comment type="induction">
    <text evidence="1">By stress conditions e.g. heat shock.</text>
</comment>
<comment type="similarity">
    <text evidence="1">Belongs to the heat shock protein 70 family.</text>
</comment>
<dbReference type="EMBL" id="CP001657">
    <property type="protein sequence ID" value="ACT14674.1"/>
    <property type="molecule type" value="Genomic_DNA"/>
</dbReference>
<dbReference type="RefSeq" id="WP_015841789.1">
    <property type="nucleotide sequence ID" value="NC_012917.1"/>
</dbReference>
<dbReference type="SMR" id="C6DF10"/>
<dbReference type="STRING" id="561230.PC1_3659"/>
<dbReference type="GeneID" id="67792532"/>
<dbReference type="KEGG" id="pct:PC1_3659"/>
<dbReference type="eggNOG" id="COG0443">
    <property type="taxonomic scope" value="Bacteria"/>
</dbReference>
<dbReference type="HOGENOM" id="CLU_005965_2_1_6"/>
<dbReference type="OrthoDB" id="9766019at2"/>
<dbReference type="Proteomes" id="UP000002736">
    <property type="component" value="Chromosome"/>
</dbReference>
<dbReference type="GO" id="GO:0005524">
    <property type="term" value="F:ATP binding"/>
    <property type="evidence" value="ECO:0007669"/>
    <property type="project" value="UniProtKB-UniRule"/>
</dbReference>
<dbReference type="GO" id="GO:0140662">
    <property type="term" value="F:ATP-dependent protein folding chaperone"/>
    <property type="evidence" value="ECO:0007669"/>
    <property type="project" value="InterPro"/>
</dbReference>
<dbReference type="GO" id="GO:0051082">
    <property type="term" value="F:unfolded protein binding"/>
    <property type="evidence" value="ECO:0007669"/>
    <property type="project" value="InterPro"/>
</dbReference>
<dbReference type="CDD" id="cd10234">
    <property type="entry name" value="ASKHA_NBD_HSP70_DnaK-like"/>
    <property type="match status" value="1"/>
</dbReference>
<dbReference type="FunFam" id="2.60.34.10:FF:000014">
    <property type="entry name" value="Chaperone protein DnaK HSP70"/>
    <property type="match status" value="1"/>
</dbReference>
<dbReference type="FunFam" id="1.20.1270.10:FF:000001">
    <property type="entry name" value="Molecular chaperone DnaK"/>
    <property type="match status" value="1"/>
</dbReference>
<dbReference type="FunFam" id="3.30.420.40:FF:000004">
    <property type="entry name" value="Molecular chaperone DnaK"/>
    <property type="match status" value="1"/>
</dbReference>
<dbReference type="FunFam" id="3.90.640.10:FF:000003">
    <property type="entry name" value="Molecular chaperone DnaK"/>
    <property type="match status" value="1"/>
</dbReference>
<dbReference type="Gene3D" id="1.20.1270.10">
    <property type="match status" value="1"/>
</dbReference>
<dbReference type="Gene3D" id="3.30.420.40">
    <property type="match status" value="2"/>
</dbReference>
<dbReference type="Gene3D" id="3.90.640.10">
    <property type="entry name" value="Actin, Chain A, domain 4"/>
    <property type="match status" value="1"/>
</dbReference>
<dbReference type="Gene3D" id="2.60.34.10">
    <property type="entry name" value="Substrate Binding Domain Of DNAk, Chain A, domain 1"/>
    <property type="match status" value="1"/>
</dbReference>
<dbReference type="HAMAP" id="MF_00332">
    <property type="entry name" value="DnaK"/>
    <property type="match status" value="1"/>
</dbReference>
<dbReference type="InterPro" id="IPR043129">
    <property type="entry name" value="ATPase_NBD"/>
</dbReference>
<dbReference type="InterPro" id="IPR012725">
    <property type="entry name" value="Chaperone_DnaK"/>
</dbReference>
<dbReference type="InterPro" id="IPR018181">
    <property type="entry name" value="Heat_shock_70_CS"/>
</dbReference>
<dbReference type="InterPro" id="IPR029048">
    <property type="entry name" value="HSP70_C_sf"/>
</dbReference>
<dbReference type="InterPro" id="IPR029047">
    <property type="entry name" value="HSP70_peptide-bd_sf"/>
</dbReference>
<dbReference type="InterPro" id="IPR013126">
    <property type="entry name" value="Hsp_70_fam"/>
</dbReference>
<dbReference type="NCBIfam" id="NF001413">
    <property type="entry name" value="PRK00290.1"/>
    <property type="match status" value="1"/>
</dbReference>
<dbReference type="NCBIfam" id="NF003520">
    <property type="entry name" value="PRK05183.1"/>
    <property type="match status" value="1"/>
</dbReference>
<dbReference type="NCBIfam" id="TIGR02350">
    <property type="entry name" value="prok_dnaK"/>
    <property type="match status" value="1"/>
</dbReference>
<dbReference type="PANTHER" id="PTHR19375">
    <property type="entry name" value="HEAT SHOCK PROTEIN 70KDA"/>
    <property type="match status" value="1"/>
</dbReference>
<dbReference type="Pfam" id="PF00012">
    <property type="entry name" value="HSP70"/>
    <property type="match status" value="1"/>
</dbReference>
<dbReference type="PRINTS" id="PR00301">
    <property type="entry name" value="HEATSHOCK70"/>
</dbReference>
<dbReference type="SUPFAM" id="SSF53067">
    <property type="entry name" value="Actin-like ATPase domain"/>
    <property type="match status" value="2"/>
</dbReference>
<dbReference type="SUPFAM" id="SSF100934">
    <property type="entry name" value="Heat shock protein 70kD (HSP70), C-terminal subdomain"/>
    <property type="match status" value="1"/>
</dbReference>
<dbReference type="SUPFAM" id="SSF100920">
    <property type="entry name" value="Heat shock protein 70kD (HSP70), peptide-binding domain"/>
    <property type="match status" value="1"/>
</dbReference>
<dbReference type="PROSITE" id="PS00297">
    <property type="entry name" value="HSP70_1"/>
    <property type="match status" value="1"/>
</dbReference>
<dbReference type="PROSITE" id="PS00329">
    <property type="entry name" value="HSP70_2"/>
    <property type="match status" value="1"/>
</dbReference>
<dbReference type="PROSITE" id="PS01036">
    <property type="entry name" value="HSP70_3"/>
    <property type="match status" value="1"/>
</dbReference>
<evidence type="ECO:0000255" key="1">
    <source>
        <dbReference type="HAMAP-Rule" id="MF_00332"/>
    </source>
</evidence>
<evidence type="ECO:0000256" key="2">
    <source>
        <dbReference type="SAM" id="MobiDB-lite"/>
    </source>
</evidence>
<sequence>MGKIIGIDLGTTNSCVAIIDGTQVKVLENSEGDRTTPSIIAYTQDGETLVGQPAKRQAVTNPKNTLFAIKRLIGRRFKDEEVQRDANIMPYKIIAADNGDAWLEVKDQKMAPPQISAEVLKKMKKTAEDYLGETISEAVITVPAYFNDAQRQATKDAGRIAGLEVKRIINEPTAAALAYGLDKEVGNRTIAVYDLGGGTFDISIIEIDEVDGEKTFEVLATNGDTHLGGEDFDSRMINYLVDEFKKEQGFDLRNDPLAMQRLKEAAEKAKIELSSAQQTDVNLPYITADATGPKHLNIKVTRAKLESLVEELVNRSLEPLKVALQDAGLSVSEIQDVILVGGQTRMPLVQKKVADFFGKEPRKDVNPDEAVAIGAAVQGGVLSGDVKDVLLLDVTPLSLGIETMGGVMTALIAKNTTIPTKHSQVFSTAEDNQSAVTIHVLQGERKRAHDNKSLGQFNLDGIQAAPRGMPQIEVTFDIDADGILHVSAKDKNSGREQKITIKASSGLNEEEIQKMVRDAEANAEADRKFEELVQARNQGDHLLHSTRKQLEEVGDKLAADDKTAIDDALKALESALKGEDKAEIEAKIQALVQVSGKLLEASQPQPGAEGAADDASARRDDDVVDAEFEEVKDKK</sequence>
<feature type="chain" id="PRO_1000205193" description="Chaperone protein DnaK">
    <location>
        <begin position="1"/>
        <end position="635"/>
    </location>
</feature>
<feature type="region of interest" description="Disordered" evidence="2">
    <location>
        <begin position="600"/>
        <end position="635"/>
    </location>
</feature>
<feature type="modified residue" description="Phosphothreonine; by autocatalysis" evidence="1">
    <location>
        <position position="199"/>
    </location>
</feature>
<gene>
    <name evidence="1" type="primary">dnaK</name>
    <name type="ordered locus">PC1_3659</name>
</gene>
<accession>C6DF10</accession>
<proteinExistence type="inferred from homology"/>
<organism>
    <name type="scientific">Pectobacterium carotovorum subsp. carotovorum (strain PC1)</name>
    <dbReference type="NCBI Taxonomy" id="561230"/>
    <lineage>
        <taxon>Bacteria</taxon>
        <taxon>Pseudomonadati</taxon>
        <taxon>Pseudomonadota</taxon>
        <taxon>Gammaproteobacteria</taxon>
        <taxon>Enterobacterales</taxon>
        <taxon>Pectobacteriaceae</taxon>
        <taxon>Pectobacterium</taxon>
    </lineage>
</organism>
<name>DNAK_PECCP</name>
<protein>
    <recommendedName>
        <fullName evidence="1">Chaperone protein DnaK</fullName>
    </recommendedName>
    <alternativeName>
        <fullName evidence="1">HSP70</fullName>
    </alternativeName>
    <alternativeName>
        <fullName evidence="1">Heat shock 70 kDa protein</fullName>
    </alternativeName>
    <alternativeName>
        <fullName evidence="1">Heat shock protein 70</fullName>
    </alternativeName>
</protein>